<keyword id="KW-0963">Cytoplasm</keyword>
<keyword id="KW-0274">FAD</keyword>
<keyword id="KW-0285">Flavoprotein</keyword>
<keyword id="KW-0520">NAD</keyword>
<keyword id="KW-1185">Reference proteome</keyword>
<keyword id="KW-0819">tRNA processing</keyword>
<feature type="chain" id="PRO_1000016557" description="tRNA uridine 5-carboxymethylaminomethyl modification enzyme MnmG">
    <location>
        <begin position="1"/>
        <end position="636"/>
    </location>
</feature>
<feature type="binding site" evidence="1">
    <location>
        <begin position="15"/>
        <end position="20"/>
    </location>
    <ligand>
        <name>FAD</name>
        <dbReference type="ChEBI" id="CHEBI:57692"/>
    </ligand>
</feature>
<feature type="binding site" evidence="1">
    <location>
        <begin position="274"/>
        <end position="288"/>
    </location>
    <ligand>
        <name>NAD(+)</name>
        <dbReference type="ChEBI" id="CHEBI:57540"/>
    </ligand>
</feature>
<dbReference type="EMBL" id="AM040264">
    <property type="protein sequence ID" value="CAJ12018.1"/>
    <property type="molecule type" value="Genomic_DNA"/>
</dbReference>
<dbReference type="RefSeq" id="WP_002967028.1">
    <property type="nucleotide sequence ID" value="NZ_KN046823.1"/>
</dbReference>
<dbReference type="SMR" id="Q2YR12"/>
<dbReference type="STRING" id="359391.BAB1_2062"/>
<dbReference type="GeneID" id="93017628"/>
<dbReference type="KEGG" id="bmf:BAB1_2062"/>
<dbReference type="PATRIC" id="fig|359391.11.peg.1294"/>
<dbReference type="HOGENOM" id="CLU_007831_2_2_5"/>
<dbReference type="PhylomeDB" id="Q2YR12"/>
<dbReference type="Proteomes" id="UP000002719">
    <property type="component" value="Chromosome I"/>
</dbReference>
<dbReference type="GO" id="GO:0005829">
    <property type="term" value="C:cytosol"/>
    <property type="evidence" value="ECO:0007669"/>
    <property type="project" value="TreeGrafter"/>
</dbReference>
<dbReference type="GO" id="GO:0050660">
    <property type="term" value="F:flavin adenine dinucleotide binding"/>
    <property type="evidence" value="ECO:0007669"/>
    <property type="project" value="UniProtKB-UniRule"/>
</dbReference>
<dbReference type="GO" id="GO:0030488">
    <property type="term" value="P:tRNA methylation"/>
    <property type="evidence" value="ECO:0007669"/>
    <property type="project" value="TreeGrafter"/>
</dbReference>
<dbReference type="GO" id="GO:0002098">
    <property type="term" value="P:tRNA wobble uridine modification"/>
    <property type="evidence" value="ECO:0007669"/>
    <property type="project" value="InterPro"/>
</dbReference>
<dbReference type="FunFam" id="3.50.50.60:FF:000145">
    <property type="entry name" value="tRNA uridine 5-carboxymethylaminomethyl modification enzyme"/>
    <property type="match status" value="1"/>
</dbReference>
<dbReference type="FunFam" id="1.10.150.570:FF:000001">
    <property type="entry name" value="tRNA uridine 5-carboxymethylaminomethyl modification enzyme MnmG"/>
    <property type="match status" value="1"/>
</dbReference>
<dbReference type="FunFam" id="3.50.50.60:FF:000002">
    <property type="entry name" value="tRNA uridine 5-carboxymethylaminomethyl modification enzyme MnmG"/>
    <property type="match status" value="1"/>
</dbReference>
<dbReference type="Gene3D" id="3.50.50.60">
    <property type="entry name" value="FAD/NAD(P)-binding domain"/>
    <property type="match status" value="2"/>
</dbReference>
<dbReference type="Gene3D" id="1.10.150.570">
    <property type="entry name" value="GidA associated domain, C-terminal subdomain"/>
    <property type="match status" value="1"/>
</dbReference>
<dbReference type="Gene3D" id="1.10.10.1800">
    <property type="entry name" value="tRNA uridine 5-carboxymethylaminomethyl modification enzyme MnmG/GidA"/>
    <property type="match status" value="1"/>
</dbReference>
<dbReference type="HAMAP" id="MF_00129">
    <property type="entry name" value="MnmG_GidA"/>
    <property type="match status" value="1"/>
</dbReference>
<dbReference type="InterPro" id="IPR036188">
    <property type="entry name" value="FAD/NAD-bd_sf"/>
</dbReference>
<dbReference type="InterPro" id="IPR049312">
    <property type="entry name" value="GIDA_C_N"/>
</dbReference>
<dbReference type="InterPro" id="IPR004416">
    <property type="entry name" value="MnmG"/>
</dbReference>
<dbReference type="InterPro" id="IPR002218">
    <property type="entry name" value="MnmG-rel"/>
</dbReference>
<dbReference type="InterPro" id="IPR020595">
    <property type="entry name" value="MnmG-rel_CS"/>
</dbReference>
<dbReference type="InterPro" id="IPR026904">
    <property type="entry name" value="MnmG_C"/>
</dbReference>
<dbReference type="InterPro" id="IPR047001">
    <property type="entry name" value="MnmG_C_subdom"/>
</dbReference>
<dbReference type="InterPro" id="IPR044920">
    <property type="entry name" value="MnmG_C_subdom_sf"/>
</dbReference>
<dbReference type="InterPro" id="IPR040131">
    <property type="entry name" value="MnmG_N"/>
</dbReference>
<dbReference type="NCBIfam" id="TIGR00136">
    <property type="entry name" value="mnmG_gidA"/>
    <property type="match status" value="1"/>
</dbReference>
<dbReference type="PANTHER" id="PTHR11806">
    <property type="entry name" value="GLUCOSE INHIBITED DIVISION PROTEIN A"/>
    <property type="match status" value="1"/>
</dbReference>
<dbReference type="PANTHER" id="PTHR11806:SF0">
    <property type="entry name" value="PROTEIN MTO1 HOMOLOG, MITOCHONDRIAL"/>
    <property type="match status" value="1"/>
</dbReference>
<dbReference type="Pfam" id="PF01134">
    <property type="entry name" value="GIDA"/>
    <property type="match status" value="1"/>
</dbReference>
<dbReference type="Pfam" id="PF21680">
    <property type="entry name" value="GIDA_C_1st"/>
    <property type="match status" value="1"/>
</dbReference>
<dbReference type="Pfam" id="PF13932">
    <property type="entry name" value="SAM_GIDA_C"/>
    <property type="match status" value="1"/>
</dbReference>
<dbReference type="SMART" id="SM01228">
    <property type="entry name" value="GIDA_assoc_3"/>
    <property type="match status" value="1"/>
</dbReference>
<dbReference type="SUPFAM" id="SSF51905">
    <property type="entry name" value="FAD/NAD(P)-binding domain"/>
    <property type="match status" value="1"/>
</dbReference>
<dbReference type="PROSITE" id="PS01280">
    <property type="entry name" value="GIDA_1"/>
    <property type="match status" value="1"/>
</dbReference>
<dbReference type="PROSITE" id="PS01281">
    <property type="entry name" value="GIDA_2"/>
    <property type="match status" value="1"/>
</dbReference>
<reference key="1">
    <citation type="journal article" date="2005" name="Infect. Immun.">
        <title>Whole-genome analyses of speciation events in pathogenic Brucellae.</title>
        <authorList>
            <person name="Chain P.S."/>
            <person name="Comerci D.J."/>
            <person name="Tolmasky M.E."/>
            <person name="Larimer F.W."/>
            <person name="Malfatti S.A."/>
            <person name="Vergez L.M."/>
            <person name="Aguero F."/>
            <person name="Land M.L."/>
            <person name="Ugalde R.A."/>
            <person name="Garcia E."/>
        </authorList>
    </citation>
    <scope>NUCLEOTIDE SEQUENCE [LARGE SCALE GENOMIC DNA]</scope>
    <source>
        <strain>2308</strain>
    </source>
</reference>
<accession>Q2YR12</accession>
<sequence length="636" mass="69432">MSSAEALAFDVIVIGGGHAGCEAASAAARAGARTALVTHRFDTIGVMSCNPAIGGLGKGHLVREIDALDGLMGRVADRAGIQFRLLNRRKGPAVRGPRTQADRKLYRLAMQQMITEQENLTVVEGGAADLVCDGERISGVTLADGRVLKCGAVVLTTGTFLNGLIHIGEKRFPAGRMGEKPALGLSERLLSFGFTLGRLKTGTPPRLDGRTIDWQSLDMQSADEEPVPFSLMTDRITTPQIECGITRTTPETHDIIRANLHRSAMYSGSIEGIGPRYCPSVEDKIVKFGDRDGHQIFLEPEGLDDDTVYPNGISTSLPEDVQLEILKTIPGLEKAVLLQPGYAIEYDFIDPRELKRSLETRKVCGLFLAGQINGTTGYEEAGAQGLLAGLNAARRAAGSEPVILQRTEAYIGVMVDDLTSRGVSEPYRMFTSRAEFRLSLRADNADQRLTPLADEVGILSEERRKRYLTRETALSHARMVTQSLSITPNLAGYYDLRLNQDGVRRSAYDLLSYPDINLDRLIAIWPELASIDPVTREALEIEAQYAVYMERQQSDIAVMEREERLLIPSGLDFDAISGLSNELKQKLKQRKPETIAEAQRVDGMTPAAVALLIAQIRKFGGRQKLAAETLEGKGAA</sequence>
<proteinExistence type="inferred from homology"/>
<protein>
    <recommendedName>
        <fullName evidence="1">tRNA uridine 5-carboxymethylaminomethyl modification enzyme MnmG</fullName>
    </recommendedName>
    <alternativeName>
        <fullName evidence="1">Glucose-inhibited division protein A</fullName>
    </alternativeName>
</protein>
<comment type="function">
    <text evidence="1">NAD-binding protein involved in the addition of a carboxymethylaminomethyl (cmnm) group at the wobble position (U34) of certain tRNAs, forming tRNA-cmnm(5)s(2)U34.</text>
</comment>
<comment type="cofactor">
    <cofactor evidence="1">
        <name>FAD</name>
        <dbReference type="ChEBI" id="CHEBI:57692"/>
    </cofactor>
</comment>
<comment type="subunit">
    <text evidence="1">Homodimer. Heterotetramer of two MnmE and two MnmG subunits.</text>
</comment>
<comment type="subcellular location">
    <subcellularLocation>
        <location evidence="1">Cytoplasm</location>
    </subcellularLocation>
</comment>
<comment type="similarity">
    <text evidence="1">Belongs to the MnmG family.</text>
</comment>
<gene>
    <name evidence="1" type="primary">mnmG</name>
    <name evidence="1" type="synonym">gidA</name>
    <name type="ordered locus">BAB1_2062</name>
</gene>
<name>MNMG_BRUA2</name>
<evidence type="ECO:0000255" key="1">
    <source>
        <dbReference type="HAMAP-Rule" id="MF_00129"/>
    </source>
</evidence>
<organism>
    <name type="scientific">Brucella abortus (strain 2308)</name>
    <dbReference type="NCBI Taxonomy" id="359391"/>
    <lineage>
        <taxon>Bacteria</taxon>
        <taxon>Pseudomonadati</taxon>
        <taxon>Pseudomonadota</taxon>
        <taxon>Alphaproteobacteria</taxon>
        <taxon>Hyphomicrobiales</taxon>
        <taxon>Brucellaceae</taxon>
        <taxon>Brucella/Ochrobactrum group</taxon>
        <taxon>Brucella</taxon>
    </lineage>
</organism>